<feature type="chain" id="PRO_0000108525" description="Transcriptional regulator MraZ">
    <location>
        <begin position="1"/>
        <end position="146"/>
    </location>
</feature>
<feature type="domain" description="SpoVT-AbrB 1" evidence="2">
    <location>
        <begin position="7"/>
        <end position="54"/>
    </location>
</feature>
<feature type="domain" description="SpoVT-AbrB 2" evidence="2">
    <location>
        <begin position="83"/>
        <end position="126"/>
    </location>
</feature>
<comment type="subunit">
    <text evidence="1">Forms oligomers.</text>
</comment>
<comment type="subcellular location">
    <subcellularLocation>
        <location evidence="1">Cytoplasm</location>
        <location evidence="1">Nucleoid</location>
    </subcellularLocation>
</comment>
<comment type="similarity">
    <text evidence="1">Belongs to the MraZ family.</text>
</comment>
<organism>
    <name type="scientific">Rhizobium meliloti (strain 1021)</name>
    <name type="common">Ensifer meliloti</name>
    <name type="synonym">Sinorhizobium meliloti</name>
    <dbReference type="NCBI Taxonomy" id="266834"/>
    <lineage>
        <taxon>Bacteria</taxon>
        <taxon>Pseudomonadati</taxon>
        <taxon>Pseudomonadota</taxon>
        <taxon>Alphaproteobacteria</taxon>
        <taxon>Hyphomicrobiales</taxon>
        <taxon>Rhizobiaceae</taxon>
        <taxon>Sinorhizobium/Ensifer group</taxon>
        <taxon>Sinorhizobium</taxon>
    </lineage>
</organism>
<name>MRAZ_RHIME</name>
<accession>Q92NL3</accession>
<proteinExistence type="inferred from homology"/>
<reference key="1">
    <citation type="journal article" date="2001" name="Proc. Natl. Acad. Sci. U.S.A.">
        <title>Analysis of the chromosome sequence of the legume symbiont Sinorhizobium meliloti strain 1021.</title>
        <authorList>
            <person name="Capela D."/>
            <person name="Barloy-Hubler F."/>
            <person name="Gouzy J."/>
            <person name="Bothe G."/>
            <person name="Ampe F."/>
            <person name="Batut J."/>
            <person name="Boistard P."/>
            <person name="Becker A."/>
            <person name="Boutry M."/>
            <person name="Cadieu E."/>
            <person name="Dreano S."/>
            <person name="Gloux S."/>
            <person name="Godrie T."/>
            <person name="Goffeau A."/>
            <person name="Kahn D."/>
            <person name="Kiss E."/>
            <person name="Lelaure V."/>
            <person name="Masuy D."/>
            <person name="Pohl T."/>
            <person name="Portetelle D."/>
            <person name="Puehler A."/>
            <person name="Purnelle B."/>
            <person name="Ramsperger U."/>
            <person name="Renard C."/>
            <person name="Thebault P."/>
            <person name="Vandenbol M."/>
            <person name="Weidner S."/>
            <person name="Galibert F."/>
        </authorList>
    </citation>
    <scope>NUCLEOTIDE SEQUENCE [LARGE SCALE GENOMIC DNA]</scope>
    <source>
        <strain>1021</strain>
    </source>
</reference>
<reference key="2">
    <citation type="journal article" date="2001" name="Science">
        <title>The composite genome of the legume symbiont Sinorhizobium meliloti.</title>
        <authorList>
            <person name="Galibert F."/>
            <person name="Finan T.M."/>
            <person name="Long S.R."/>
            <person name="Puehler A."/>
            <person name="Abola P."/>
            <person name="Ampe F."/>
            <person name="Barloy-Hubler F."/>
            <person name="Barnett M.J."/>
            <person name="Becker A."/>
            <person name="Boistard P."/>
            <person name="Bothe G."/>
            <person name="Boutry M."/>
            <person name="Bowser L."/>
            <person name="Buhrmester J."/>
            <person name="Cadieu E."/>
            <person name="Capela D."/>
            <person name="Chain P."/>
            <person name="Cowie A."/>
            <person name="Davis R.W."/>
            <person name="Dreano S."/>
            <person name="Federspiel N.A."/>
            <person name="Fisher R.F."/>
            <person name="Gloux S."/>
            <person name="Godrie T."/>
            <person name="Goffeau A."/>
            <person name="Golding B."/>
            <person name="Gouzy J."/>
            <person name="Gurjal M."/>
            <person name="Hernandez-Lucas I."/>
            <person name="Hong A."/>
            <person name="Huizar L."/>
            <person name="Hyman R.W."/>
            <person name="Jones T."/>
            <person name="Kahn D."/>
            <person name="Kahn M.L."/>
            <person name="Kalman S."/>
            <person name="Keating D.H."/>
            <person name="Kiss E."/>
            <person name="Komp C."/>
            <person name="Lelaure V."/>
            <person name="Masuy D."/>
            <person name="Palm C."/>
            <person name="Peck M.C."/>
            <person name="Pohl T.M."/>
            <person name="Portetelle D."/>
            <person name="Purnelle B."/>
            <person name="Ramsperger U."/>
            <person name="Surzycki R."/>
            <person name="Thebault P."/>
            <person name="Vandenbol M."/>
            <person name="Vorhoelter F.J."/>
            <person name="Weidner S."/>
            <person name="Wells D.H."/>
            <person name="Wong K."/>
            <person name="Yeh K.-C."/>
            <person name="Batut J."/>
        </authorList>
    </citation>
    <scope>NUCLEOTIDE SEQUENCE [LARGE SCALE GENOMIC DNA]</scope>
    <source>
        <strain>1021</strain>
    </source>
</reference>
<dbReference type="EMBL" id="AL591688">
    <property type="protein sequence ID" value="CAC46764.1"/>
    <property type="molecule type" value="Genomic_DNA"/>
</dbReference>
<dbReference type="RefSeq" id="NP_386291.1">
    <property type="nucleotide sequence ID" value="NC_003047.1"/>
</dbReference>
<dbReference type="RefSeq" id="WP_010969752.1">
    <property type="nucleotide sequence ID" value="NC_003047.1"/>
</dbReference>
<dbReference type="SMR" id="Q92NL3"/>
<dbReference type="EnsemblBacteria" id="CAC46764">
    <property type="protein sequence ID" value="CAC46764"/>
    <property type="gene ID" value="SMc01857"/>
</dbReference>
<dbReference type="KEGG" id="sme:SMc01857"/>
<dbReference type="PATRIC" id="fig|266834.11.peg.3651"/>
<dbReference type="eggNOG" id="COG2001">
    <property type="taxonomic scope" value="Bacteria"/>
</dbReference>
<dbReference type="HOGENOM" id="CLU_107907_1_0_5"/>
<dbReference type="OrthoDB" id="9807753at2"/>
<dbReference type="Proteomes" id="UP000001976">
    <property type="component" value="Chromosome"/>
</dbReference>
<dbReference type="GO" id="GO:0005737">
    <property type="term" value="C:cytoplasm"/>
    <property type="evidence" value="ECO:0007669"/>
    <property type="project" value="UniProtKB-UniRule"/>
</dbReference>
<dbReference type="GO" id="GO:0009295">
    <property type="term" value="C:nucleoid"/>
    <property type="evidence" value="ECO:0007669"/>
    <property type="project" value="UniProtKB-SubCell"/>
</dbReference>
<dbReference type="GO" id="GO:0003700">
    <property type="term" value="F:DNA-binding transcription factor activity"/>
    <property type="evidence" value="ECO:0007669"/>
    <property type="project" value="UniProtKB-UniRule"/>
</dbReference>
<dbReference type="GO" id="GO:0000976">
    <property type="term" value="F:transcription cis-regulatory region binding"/>
    <property type="evidence" value="ECO:0007669"/>
    <property type="project" value="TreeGrafter"/>
</dbReference>
<dbReference type="GO" id="GO:2000143">
    <property type="term" value="P:negative regulation of DNA-templated transcription initiation"/>
    <property type="evidence" value="ECO:0007669"/>
    <property type="project" value="TreeGrafter"/>
</dbReference>
<dbReference type="CDD" id="cd16321">
    <property type="entry name" value="MraZ_C"/>
    <property type="match status" value="1"/>
</dbReference>
<dbReference type="CDD" id="cd16320">
    <property type="entry name" value="MraZ_N"/>
    <property type="match status" value="1"/>
</dbReference>
<dbReference type="Gene3D" id="3.40.1550.20">
    <property type="entry name" value="Transcriptional regulator MraZ domain"/>
    <property type="match status" value="1"/>
</dbReference>
<dbReference type="HAMAP" id="MF_01008">
    <property type="entry name" value="MraZ"/>
    <property type="match status" value="1"/>
</dbReference>
<dbReference type="InterPro" id="IPR003444">
    <property type="entry name" value="MraZ"/>
</dbReference>
<dbReference type="InterPro" id="IPR035644">
    <property type="entry name" value="MraZ_C"/>
</dbReference>
<dbReference type="InterPro" id="IPR020603">
    <property type="entry name" value="MraZ_dom"/>
</dbReference>
<dbReference type="InterPro" id="IPR035642">
    <property type="entry name" value="MraZ_N"/>
</dbReference>
<dbReference type="InterPro" id="IPR038619">
    <property type="entry name" value="MraZ_sf"/>
</dbReference>
<dbReference type="InterPro" id="IPR007159">
    <property type="entry name" value="SpoVT-AbrB_dom"/>
</dbReference>
<dbReference type="InterPro" id="IPR037914">
    <property type="entry name" value="SpoVT-AbrB_sf"/>
</dbReference>
<dbReference type="NCBIfam" id="NF001477">
    <property type="entry name" value="PRK00326.2-4"/>
    <property type="match status" value="1"/>
</dbReference>
<dbReference type="PANTHER" id="PTHR34701">
    <property type="entry name" value="TRANSCRIPTIONAL REGULATOR MRAZ"/>
    <property type="match status" value="1"/>
</dbReference>
<dbReference type="PANTHER" id="PTHR34701:SF1">
    <property type="entry name" value="TRANSCRIPTIONAL REGULATOR MRAZ"/>
    <property type="match status" value="1"/>
</dbReference>
<dbReference type="Pfam" id="PF02381">
    <property type="entry name" value="MraZ"/>
    <property type="match status" value="1"/>
</dbReference>
<dbReference type="SUPFAM" id="SSF89447">
    <property type="entry name" value="AbrB/MazE/MraZ-like"/>
    <property type="match status" value="1"/>
</dbReference>
<dbReference type="PROSITE" id="PS51740">
    <property type="entry name" value="SPOVT_ABRB"/>
    <property type="match status" value="2"/>
</dbReference>
<protein>
    <recommendedName>
        <fullName>Transcriptional regulator MraZ</fullName>
    </recommendedName>
</protein>
<evidence type="ECO:0000255" key="1">
    <source>
        <dbReference type="HAMAP-Rule" id="MF_01008"/>
    </source>
</evidence>
<evidence type="ECO:0000255" key="2">
    <source>
        <dbReference type="PROSITE-ProRule" id="PRU01076"/>
    </source>
</evidence>
<sequence>MNRFLSHVTNRIDAKGRVSVPSVFRAVLLEAGVRELYCFQDFVFPAISVGGPELLDRFEKQMAAEDPFSDAANEMSLLVHGGGVYVKLDPEGRLMVTDFIRDFTGISNDVTFVGRGDHFQLWDPQAFARAQAEAREGRKQRGLRSQ</sequence>
<gene>
    <name evidence="1" type="primary">mraZ</name>
    <name type="ordered locus">R02185</name>
    <name type="ORF">SMc01857</name>
</gene>
<keyword id="KW-0963">Cytoplasm</keyword>
<keyword id="KW-0238">DNA-binding</keyword>
<keyword id="KW-1185">Reference proteome</keyword>
<keyword id="KW-0677">Repeat</keyword>
<keyword id="KW-0804">Transcription</keyword>
<keyword id="KW-0805">Transcription regulation</keyword>